<feature type="chain" id="PRO_0000425987" description="DNA replication licensing factor MCM2">
    <location>
        <begin position="1"/>
        <end position="961"/>
    </location>
</feature>
<feature type="domain" description="MCM">
    <location>
        <begin position="524"/>
        <end position="730"/>
    </location>
</feature>
<feature type="zinc finger region" description="C4-type" evidence="3">
    <location>
        <begin position="380"/>
        <end position="406"/>
    </location>
</feature>
<feature type="region of interest" description="Disordered" evidence="4">
    <location>
        <begin position="1"/>
        <end position="81"/>
    </location>
</feature>
<feature type="region of interest" description="Disordered" evidence="4">
    <location>
        <begin position="120"/>
        <end position="220"/>
    </location>
</feature>
<feature type="short sequence motif" description="Arginine finger">
    <location>
        <begin position="706"/>
        <end position="709"/>
    </location>
</feature>
<feature type="compositionally biased region" description="Polar residues" evidence="4">
    <location>
        <begin position="1"/>
        <end position="17"/>
    </location>
</feature>
<feature type="compositionally biased region" description="Acidic residues" evidence="4">
    <location>
        <begin position="39"/>
        <end position="78"/>
    </location>
</feature>
<feature type="compositionally biased region" description="Basic and acidic residues" evidence="4">
    <location>
        <begin position="120"/>
        <end position="146"/>
    </location>
</feature>
<feature type="compositionally biased region" description="Basic and acidic residues" evidence="4">
    <location>
        <begin position="166"/>
        <end position="176"/>
    </location>
</feature>
<feature type="compositionally biased region" description="Acidic residues" evidence="4">
    <location>
        <begin position="205"/>
        <end position="220"/>
    </location>
</feature>
<feature type="binding site" evidence="1">
    <location>
        <begin position="574"/>
        <end position="581"/>
    </location>
    <ligand>
        <name>ATP</name>
        <dbReference type="ChEBI" id="CHEBI:30616"/>
    </ligand>
</feature>
<dbReference type="EC" id="3.6.4.12" evidence="7"/>
<dbReference type="EMBL" id="DP000010">
    <property type="protein sequence ID" value="ABA93692.1"/>
    <property type="molecule type" value="Genomic_DNA"/>
</dbReference>
<dbReference type="EMBL" id="AP008217">
    <property type="protein sequence ID" value="BAF28273.1"/>
    <property type="molecule type" value="Genomic_DNA"/>
</dbReference>
<dbReference type="EMBL" id="AP014967">
    <property type="protein sequence ID" value="BAT14058.1"/>
    <property type="molecule type" value="Genomic_DNA"/>
</dbReference>
<dbReference type="EMBL" id="CM000148">
    <property type="protein sequence ID" value="EEE52107.1"/>
    <property type="molecule type" value="Genomic_DNA"/>
</dbReference>
<dbReference type="EMBL" id="AK121422">
    <property type="protein sequence ID" value="BAH00480.1"/>
    <property type="molecule type" value="mRNA"/>
</dbReference>
<dbReference type="RefSeq" id="XP_015615188.1">
    <property type="nucleotide sequence ID" value="XM_015759702.1"/>
</dbReference>
<dbReference type="SMR" id="Q2R482"/>
<dbReference type="FunCoup" id="Q2R482">
    <property type="interactions" value="2455"/>
</dbReference>
<dbReference type="STRING" id="39947.Q2R482"/>
<dbReference type="iPTMnet" id="Q2R482"/>
<dbReference type="PaxDb" id="39947-Q2R482"/>
<dbReference type="EnsemblPlants" id="Os11t0484300-01">
    <property type="protein sequence ID" value="Os11t0484300-01"/>
    <property type="gene ID" value="Os11g0484300"/>
</dbReference>
<dbReference type="Gramene" id="Os11t0484300-01">
    <property type="protein sequence ID" value="Os11t0484300-01"/>
    <property type="gene ID" value="Os11g0484300"/>
</dbReference>
<dbReference type="KEGG" id="dosa:Os11g0484300"/>
<dbReference type="eggNOG" id="KOG0477">
    <property type="taxonomic scope" value="Eukaryota"/>
</dbReference>
<dbReference type="HOGENOM" id="CLU_000995_0_1_1"/>
<dbReference type="InParanoid" id="Q2R482"/>
<dbReference type="OMA" id="TYERVTT"/>
<dbReference type="OrthoDB" id="844at2759"/>
<dbReference type="PlantReactome" id="R-OSA-9640882">
    <property type="pathway name" value="Assembly of pre-replication complex"/>
</dbReference>
<dbReference type="PlantReactome" id="R-OSA-9645850">
    <property type="pathway name" value="Activation of pre-replication complex"/>
</dbReference>
<dbReference type="PlantReactome" id="R-OSA-9675824">
    <property type="pathway name" value="DNA replication Initiation"/>
</dbReference>
<dbReference type="Proteomes" id="UP000000763">
    <property type="component" value="Chromosome 11"/>
</dbReference>
<dbReference type="Proteomes" id="UP000007752">
    <property type="component" value="Chromosome 11"/>
</dbReference>
<dbReference type="Proteomes" id="UP000059680">
    <property type="component" value="Chromosome 11"/>
</dbReference>
<dbReference type="GO" id="GO:0000785">
    <property type="term" value="C:chromatin"/>
    <property type="evidence" value="ECO:0007669"/>
    <property type="project" value="EnsemblPlants"/>
</dbReference>
<dbReference type="GO" id="GO:0042555">
    <property type="term" value="C:MCM complex"/>
    <property type="evidence" value="ECO:0000318"/>
    <property type="project" value="GO_Central"/>
</dbReference>
<dbReference type="GO" id="GO:0005634">
    <property type="term" value="C:nucleus"/>
    <property type="evidence" value="ECO:0000318"/>
    <property type="project" value="GO_Central"/>
</dbReference>
<dbReference type="GO" id="GO:0000347">
    <property type="term" value="C:THO complex"/>
    <property type="evidence" value="ECO:0007669"/>
    <property type="project" value="EnsemblPlants"/>
</dbReference>
<dbReference type="GO" id="GO:0005524">
    <property type="term" value="F:ATP binding"/>
    <property type="evidence" value="ECO:0007669"/>
    <property type="project" value="UniProtKB-KW"/>
</dbReference>
<dbReference type="GO" id="GO:0016887">
    <property type="term" value="F:ATP hydrolysis activity"/>
    <property type="evidence" value="ECO:0007669"/>
    <property type="project" value="RHEA"/>
</dbReference>
<dbReference type="GO" id="GO:0004386">
    <property type="term" value="F:helicase activity"/>
    <property type="evidence" value="ECO:0007669"/>
    <property type="project" value="UniProtKB-KW"/>
</dbReference>
<dbReference type="GO" id="GO:0003697">
    <property type="term" value="F:single-stranded DNA binding"/>
    <property type="evidence" value="ECO:0000318"/>
    <property type="project" value="GO_Central"/>
</dbReference>
<dbReference type="GO" id="GO:0008270">
    <property type="term" value="F:zinc ion binding"/>
    <property type="evidence" value="ECO:0007669"/>
    <property type="project" value="UniProtKB-KW"/>
</dbReference>
<dbReference type="GO" id="GO:0044786">
    <property type="term" value="P:cell cycle DNA replication"/>
    <property type="evidence" value="ECO:0000314"/>
    <property type="project" value="UniProtKB"/>
</dbReference>
<dbReference type="GO" id="GO:0006260">
    <property type="term" value="P:DNA replication"/>
    <property type="evidence" value="ECO:0000318"/>
    <property type="project" value="GO_Central"/>
</dbReference>
<dbReference type="GO" id="GO:0000727">
    <property type="term" value="P:double-strand break repair via break-induced replication"/>
    <property type="evidence" value="ECO:0000318"/>
    <property type="project" value="GO_Central"/>
</dbReference>
<dbReference type="GO" id="GO:0009793">
    <property type="term" value="P:embryo development ending in seed dormancy"/>
    <property type="evidence" value="ECO:0007669"/>
    <property type="project" value="EnsemblPlants"/>
</dbReference>
<dbReference type="GO" id="GO:1902975">
    <property type="term" value="P:mitotic DNA replication initiation"/>
    <property type="evidence" value="ECO:0000318"/>
    <property type="project" value="GO_Central"/>
</dbReference>
<dbReference type="GO" id="GO:0042127">
    <property type="term" value="P:regulation of cell population proliferation"/>
    <property type="evidence" value="ECO:0007669"/>
    <property type="project" value="EnsemblPlants"/>
</dbReference>
<dbReference type="GO" id="GO:0010082">
    <property type="term" value="P:regulation of root meristem growth"/>
    <property type="evidence" value="ECO:0007669"/>
    <property type="project" value="EnsemblPlants"/>
</dbReference>
<dbReference type="CDD" id="cd17753">
    <property type="entry name" value="MCM2"/>
    <property type="match status" value="1"/>
</dbReference>
<dbReference type="FunFam" id="2.20.28.10:FF:000002">
    <property type="entry name" value="DNA helicase"/>
    <property type="match status" value="1"/>
</dbReference>
<dbReference type="FunFam" id="3.30.1640.10:FF:000008">
    <property type="entry name" value="DNA helicase"/>
    <property type="match status" value="1"/>
</dbReference>
<dbReference type="FunFam" id="3.40.50.300:FF:000138">
    <property type="entry name" value="DNA helicase"/>
    <property type="match status" value="1"/>
</dbReference>
<dbReference type="Gene3D" id="2.20.28.10">
    <property type="match status" value="1"/>
</dbReference>
<dbReference type="Gene3D" id="3.30.1640.10">
    <property type="entry name" value="mini-chromosome maintenance (MCM) complex, chain A, domain 1"/>
    <property type="match status" value="1"/>
</dbReference>
<dbReference type="Gene3D" id="2.40.50.140">
    <property type="entry name" value="Nucleic acid-binding proteins"/>
    <property type="match status" value="1"/>
</dbReference>
<dbReference type="Gene3D" id="3.40.50.300">
    <property type="entry name" value="P-loop containing nucleotide triphosphate hydrolases"/>
    <property type="match status" value="1"/>
</dbReference>
<dbReference type="InterPro" id="IPR031327">
    <property type="entry name" value="MCM"/>
</dbReference>
<dbReference type="InterPro" id="IPR008045">
    <property type="entry name" value="MCM2"/>
</dbReference>
<dbReference type="InterPro" id="IPR018525">
    <property type="entry name" value="MCM_CS"/>
</dbReference>
<dbReference type="InterPro" id="IPR001208">
    <property type="entry name" value="MCM_dom"/>
</dbReference>
<dbReference type="InterPro" id="IPR041562">
    <property type="entry name" value="MCM_lid"/>
</dbReference>
<dbReference type="InterPro" id="IPR027925">
    <property type="entry name" value="MCM_N"/>
</dbReference>
<dbReference type="InterPro" id="IPR033762">
    <property type="entry name" value="MCM_OB"/>
</dbReference>
<dbReference type="InterPro" id="IPR012340">
    <property type="entry name" value="NA-bd_OB-fold"/>
</dbReference>
<dbReference type="InterPro" id="IPR027417">
    <property type="entry name" value="P-loop_NTPase"/>
</dbReference>
<dbReference type="PANTHER" id="PTHR11630">
    <property type="entry name" value="DNA REPLICATION LICENSING FACTOR MCM FAMILY MEMBER"/>
    <property type="match status" value="1"/>
</dbReference>
<dbReference type="PANTHER" id="PTHR11630:SF44">
    <property type="entry name" value="DNA REPLICATION LICENSING FACTOR MCM2"/>
    <property type="match status" value="1"/>
</dbReference>
<dbReference type="Pfam" id="PF00493">
    <property type="entry name" value="MCM"/>
    <property type="match status" value="1"/>
</dbReference>
<dbReference type="Pfam" id="PF12619">
    <property type="entry name" value="MCM2_N"/>
    <property type="match status" value="1"/>
</dbReference>
<dbReference type="Pfam" id="PF17855">
    <property type="entry name" value="MCM_lid"/>
    <property type="match status" value="1"/>
</dbReference>
<dbReference type="Pfam" id="PF14551">
    <property type="entry name" value="MCM_N"/>
    <property type="match status" value="1"/>
</dbReference>
<dbReference type="Pfam" id="PF17207">
    <property type="entry name" value="MCM_OB"/>
    <property type="match status" value="1"/>
</dbReference>
<dbReference type="Pfam" id="PF23669">
    <property type="entry name" value="WH_MCM2"/>
    <property type="match status" value="1"/>
</dbReference>
<dbReference type="PRINTS" id="PR01657">
    <property type="entry name" value="MCMFAMILY"/>
</dbReference>
<dbReference type="PRINTS" id="PR01658">
    <property type="entry name" value="MCMPROTEIN2"/>
</dbReference>
<dbReference type="SMART" id="SM00350">
    <property type="entry name" value="MCM"/>
    <property type="match status" value="1"/>
</dbReference>
<dbReference type="SUPFAM" id="SSF50249">
    <property type="entry name" value="Nucleic acid-binding proteins"/>
    <property type="match status" value="1"/>
</dbReference>
<dbReference type="SUPFAM" id="SSF52540">
    <property type="entry name" value="P-loop containing nucleoside triphosphate hydrolases"/>
    <property type="match status" value="1"/>
</dbReference>
<dbReference type="PROSITE" id="PS00847">
    <property type="entry name" value="MCM_1"/>
    <property type="match status" value="1"/>
</dbReference>
<dbReference type="PROSITE" id="PS50051">
    <property type="entry name" value="MCM_2"/>
    <property type="match status" value="1"/>
</dbReference>
<gene>
    <name evidence="6" type="primary">MCM2</name>
    <name type="ordered locus">Os11g0484300</name>
    <name type="ordered locus">LOC_Os11g29380</name>
    <name evidence="8" type="ORF">OsJ_33907</name>
</gene>
<reference key="1">
    <citation type="journal article" date="2005" name="BMC Biol.">
        <title>The sequence of rice chromosomes 11 and 12, rich in disease resistance genes and recent gene duplications.</title>
        <authorList>
            <consortium name="The rice chromosomes 11 and 12 sequencing consortia"/>
        </authorList>
    </citation>
    <scope>NUCLEOTIDE SEQUENCE [LARGE SCALE GENOMIC DNA]</scope>
    <source>
        <strain>cv. Nipponbare</strain>
    </source>
</reference>
<reference key="2">
    <citation type="journal article" date="2005" name="Nature">
        <title>The map-based sequence of the rice genome.</title>
        <authorList>
            <consortium name="International rice genome sequencing project (IRGSP)"/>
        </authorList>
    </citation>
    <scope>NUCLEOTIDE SEQUENCE [LARGE SCALE GENOMIC DNA]</scope>
    <source>
        <strain>cv. Nipponbare</strain>
    </source>
</reference>
<reference key="3">
    <citation type="journal article" date="2008" name="Nucleic Acids Res.">
        <title>The rice annotation project database (RAP-DB): 2008 update.</title>
        <authorList>
            <consortium name="The rice annotation project (RAP)"/>
        </authorList>
    </citation>
    <scope>GENOME REANNOTATION</scope>
    <source>
        <strain>cv. Nipponbare</strain>
    </source>
</reference>
<reference key="4">
    <citation type="journal article" date="2013" name="Rice">
        <title>Improvement of the Oryza sativa Nipponbare reference genome using next generation sequence and optical map data.</title>
        <authorList>
            <person name="Kawahara Y."/>
            <person name="de la Bastide M."/>
            <person name="Hamilton J.P."/>
            <person name="Kanamori H."/>
            <person name="McCombie W.R."/>
            <person name="Ouyang S."/>
            <person name="Schwartz D.C."/>
            <person name="Tanaka T."/>
            <person name="Wu J."/>
            <person name="Zhou S."/>
            <person name="Childs K.L."/>
            <person name="Davidson R.M."/>
            <person name="Lin H."/>
            <person name="Quesada-Ocampo L."/>
            <person name="Vaillancourt B."/>
            <person name="Sakai H."/>
            <person name="Lee S.S."/>
            <person name="Kim J."/>
            <person name="Numa H."/>
            <person name="Itoh T."/>
            <person name="Buell C.R."/>
            <person name="Matsumoto T."/>
        </authorList>
    </citation>
    <scope>GENOME REANNOTATION</scope>
    <source>
        <strain>cv. Nipponbare</strain>
    </source>
</reference>
<reference key="5">
    <citation type="journal article" date="2005" name="PLoS Biol.">
        <title>The genomes of Oryza sativa: a history of duplications.</title>
        <authorList>
            <person name="Yu J."/>
            <person name="Wang J."/>
            <person name="Lin W."/>
            <person name="Li S."/>
            <person name="Li H."/>
            <person name="Zhou J."/>
            <person name="Ni P."/>
            <person name="Dong W."/>
            <person name="Hu S."/>
            <person name="Zeng C."/>
            <person name="Zhang J."/>
            <person name="Zhang Y."/>
            <person name="Li R."/>
            <person name="Xu Z."/>
            <person name="Li S."/>
            <person name="Li X."/>
            <person name="Zheng H."/>
            <person name="Cong L."/>
            <person name="Lin L."/>
            <person name="Yin J."/>
            <person name="Geng J."/>
            <person name="Li G."/>
            <person name="Shi J."/>
            <person name="Liu J."/>
            <person name="Lv H."/>
            <person name="Li J."/>
            <person name="Wang J."/>
            <person name="Deng Y."/>
            <person name="Ran L."/>
            <person name="Shi X."/>
            <person name="Wang X."/>
            <person name="Wu Q."/>
            <person name="Li C."/>
            <person name="Ren X."/>
            <person name="Wang J."/>
            <person name="Wang X."/>
            <person name="Li D."/>
            <person name="Liu D."/>
            <person name="Zhang X."/>
            <person name="Ji Z."/>
            <person name="Zhao W."/>
            <person name="Sun Y."/>
            <person name="Zhang Z."/>
            <person name="Bao J."/>
            <person name="Han Y."/>
            <person name="Dong L."/>
            <person name="Ji J."/>
            <person name="Chen P."/>
            <person name="Wu S."/>
            <person name="Liu J."/>
            <person name="Xiao Y."/>
            <person name="Bu D."/>
            <person name="Tan J."/>
            <person name="Yang L."/>
            <person name="Ye C."/>
            <person name="Zhang J."/>
            <person name="Xu J."/>
            <person name="Zhou Y."/>
            <person name="Yu Y."/>
            <person name="Zhang B."/>
            <person name="Zhuang S."/>
            <person name="Wei H."/>
            <person name="Liu B."/>
            <person name="Lei M."/>
            <person name="Yu H."/>
            <person name="Li Y."/>
            <person name="Xu H."/>
            <person name="Wei S."/>
            <person name="He X."/>
            <person name="Fang L."/>
            <person name="Zhang Z."/>
            <person name="Zhang Y."/>
            <person name="Huang X."/>
            <person name="Su Z."/>
            <person name="Tong W."/>
            <person name="Li J."/>
            <person name="Tong Z."/>
            <person name="Li S."/>
            <person name="Ye J."/>
            <person name="Wang L."/>
            <person name="Fang L."/>
            <person name="Lei T."/>
            <person name="Chen C.-S."/>
            <person name="Chen H.-C."/>
            <person name="Xu Z."/>
            <person name="Li H."/>
            <person name="Huang H."/>
            <person name="Zhang F."/>
            <person name="Xu H."/>
            <person name="Li N."/>
            <person name="Zhao C."/>
            <person name="Li S."/>
            <person name="Dong L."/>
            <person name="Huang Y."/>
            <person name="Li L."/>
            <person name="Xi Y."/>
            <person name="Qi Q."/>
            <person name="Li W."/>
            <person name="Zhang B."/>
            <person name="Hu W."/>
            <person name="Zhang Y."/>
            <person name="Tian X."/>
            <person name="Jiao Y."/>
            <person name="Liang X."/>
            <person name="Jin J."/>
            <person name="Gao L."/>
            <person name="Zheng W."/>
            <person name="Hao B."/>
            <person name="Liu S.-M."/>
            <person name="Wang W."/>
            <person name="Yuan L."/>
            <person name="Cao M."/>
            <person name="McDermott J."/>
            <person name="Samudrala R."/>
            <person name="Wang J."/>
            <person name="Wong G.K.-S."/>
            <person name="Yang H."/>
        </authorList>
    </citation>
    <scope>NUCLEOTIDE SEQUENCE [LARGE SCALE GENOMIC DNA]</scope>
    <source>
        <strain>cv. Nipponbare</strain>
    </source>
</reference>
<reference key="6">
    <citation type="journal article" date="2003" name="Science">
        <title>Collection, mapping, and annotation of over 28,000 cDNA clones from japonica rice.</title>
        <authorList>
            <consortium name="The rice full-length cDNA consortium"/>
        </authorList>
    </citation>
    <scope>NUCLEOTIDE SEQUENCE [LARGE SCALE MRNA]</scope>
    <source>
        <strain>cv. Nipponbare</strain>
    </source>
</reference>
<reference key="7">
    <citation type="journal article" date="2007" name="Plant Physiol.">
        <title>Genome-wide analysis of the core DNA replication machinery in the higher plants Arabidopsis and rice.</title>
        <authorList>
            <person name="Shultz R.W."/>
            <person name="Tatineni V.M."/>
            <person name="Hanley-Bowdoin L."/>
            <person name="Thompson W.F."/>
        </authorList>
    </citation>
    <scope>GENE FAMILY</scope>
</reference>
<reference key="8">
    <citation type="journal article" date="2008" name="BMB Rep.">
        <title>Identification and characterization of a rice MCM2 homologue required for DNA replication.</title>
        <authorList>
            <person name="Cho J.H."/>
            <person name="Kim H.B."/>
            <person name="Kim H.S."/>
            <person name="Choi S.B."/>
        </authorList>
    </citation>
    <scope>FUNCTION</scope>
    <scope>INTERACTION WITH CSN5</scope>
    <scope>TISSUE SPECIFICITY</scope>
</reference>
<proteinExistence type="evidence at protein level"/>
<organism>
    <name type="scientific">Oryza sativa subsp. japonica</name>
    <name type="common">Rice</name>
    <dbReference type="NCBI Taxonomy" id="39947"/>
    <lineage>
        <taxon>Eukaryota</taxon>
        <taxon>Viridiplantae</taxon>
        <taxon>Streptophyta</taxon>
        <taxon>Embryophyta</taxon>
        <taxon>Tracheophyta</taxon>
        <taxon>Spermatophyta</taxon>
        <taxon>Magnoliopsida</taxon>
        <taxon>Liliopsida</taxon>
        <taxon>Poales</taxon>
        <taxon>Poaceae</taxon>
        <taxon>BOP clade</taxon>
        <taxon>Oryzoideae</taxon>
        <taxon>Oryzeae</taxon>
        <taxon>Oryzinae</taxon>
        <taxon>Oryza</taxon>
        <taxon>Oryza sativa</taxon>
    </lineage>
</organism>
<keyword id="KW-0067">ATP-binding</keyword>
<keyword id="KW-0131">Cell cycle</keyword>
<keyword id="KW-0235">DNA replication</keyword>
<keyword id="KW-0238">DNA-binding</keyword>
<keyword id="KW-0347">Helicase</keyword>
<keyword id="KW-0378">Hydrolase</keyword>
<keyword id="KW-0479">Metal-binding</keyword>
<keyword id="KW-0547">Nucleotide-binding</keyword>
<keyword id="KW-0539">Nucleus</keyword>
<keyword id="KW-1185">Reference proteome</keyword>
<keyword id="KW-0862">Zinc</keyword>
<keyword id="KW-0863">Zinc-finger</keyword>
<accession>Q2R482</accession>
<accession>A0A0N7KSX8</accession>
<sequence>MDDSENNAPSTPGSPGFSTDRLPPNTTTSRGATDPSSYSDDDDDDVVGAEEAEVDPNVLPEDDGVVAAEEEEDGEDLFNDNYLDDYRRMDEQDQYESVGLDDSIEDERNLDEIMADRRAAEAELDARDVRTGAAPDRKLPRMLHDQDTDEDMSFRRPKRHRANFRPPREPRTPRSDDDGDGATPSSPGRSQRGMYSGGDVPMTDQTDDDPYEDEFDEEDEMNMYRVQGTLREWVTRDEVRRFIAKKFKEFLLTYVNPKNEQGEFEYVRLINEMVLANKCSLEIDYKQFIYIHPNIAIWLADAPQSVLEVMEEVAKNVVFDLHKNYRNIHQKIYVRITNLPVYDQIRNIRQIHLNTMIRIGGVVTRRSGVFPQLQQVKFDCSKCGTVLGPFFQNSYTEVKVGSCPECQSKGPFTINVEQTIYRNYQKLTLQESPGIVPAGRLPRYKEVILLNDLIDCARPGEEIEVTGIYTNNFDLSLNTKNGFPVFATVVEANYVAKKQDLFSAYKLTDEDKAEIEKLAKDPRIGERIVKSIAPSIYGHEDIKTAIALAMFGGQEKNVKGKHRLRGDINVLLLGDPGTAKSQFLKYVEKTGHRAVYTTGKGASAVGLTAAVHKDPVTREWTLEGGALVLADRGICLIDEFDKMNDQDRVSIHEAMEQQSISISKAGIVTSLQARCSVIAAANPIGGRYDSSKTFTQNVELTDPIISRFDVLCVVKDIVDPFTDEMLARFVVDSHARSQPKGANLEDRVPTDVEDDPLAAARQADPDILSQDMLKKYITYAKLNVFPKIHDADLDKISHVYAELRRESSHGQGVPIAVRHIESIIRMSEAHARMHLRSYVSQEDVDMAIRVLLDSFISTQKFGVQKALQKNFRKYMTYKKDYNELLLLLLRTLVKDVLHFEEIVSGPTTRLTHIEVKVEDLKNKAQEYEIYDLRPFFSSAHFRDNNFVLDEGRGIIRHPLAA</sequence>
<evidence type="ECO:0000250" key="1"/>
<evidence type="ECO:0000250" key="2">
    <source>
        <dbReference type="UniProtKB" id="Q9LPD9"/>
    </source>
</evidence>
<evidence type="ECO:0000255" key="3"/>
<evidence type="ECO:0000256" key="4">
    <source>
        <dbReference type="SAM" id="MobiDB-lite"/>
    </source>
</evidence>
<evidence type="ECO:0000269" key="5">
    <source>
    </source>
</evidence>
<evidence type="ECO:0000303" key="6">
    <source>
    </source>
</evidence>
<evidence type="ECO:0000305" key="7"/>
<evidence type="ECO:0000312" key="8">
    <source>
        <dbReference type="EMBL" id="EEE52107.1"/>
    </source>
</evidence>
<protein>
    <recommendedName>
        <fullName evidence="7">DNA replication licensing factor MCM2</fullName>
        <ecNumber evidence="7">3.6.4.12</ecNumber>
    </recommendedName>
    <alternativeName>
        <fullName evidence="6">Minichromosome maintenance protein 2</fullName>
        <shortName evidence="6">OsMCM2</shortName>
    </alternativeName>
</protein>
<comment type="function">
    <text evidence="5">Probable component of the MCM2-7 complex (MCM complex) that may function as a DNA helicase and which is essential to undergo a single round of replication initiation and elongation per cell cycle in eukaryotic cells. Can complement the fission yeast mcm2 mutant.</text>
</comment>
<comment type="catalytic activity">
    <reaction evidence="7">
        <text>ATP + H2O = ADP + phosphate + H(+)</text>
        <dbReference type="Rhea" id="RHEA:13065"/>
        <dbReference type="ChEBI" id="CHEBI:15377"/>
        <dbReference type="ChEBI" id="CHEBI:15378"/>
        <dbReference type="ChEBI" id="CHEBI:30616"/>
        <dbReference type="ChEBI" id="CHEBI:43474"/>
        <dbReference type="ChEBI" id="CHEBI:456216"/>
        <dbReference type="EC" id="3.6.4.12"/>
    </reaction>
</comment>
<comment type="subunit">
    <text evidence="2 5">Component of the minichromosome maintenance (MCM) complex, a heterotetramer composed of MCM2, MCM3, MCM4, MCM5, MCM6 and MCM7 (By similarity). Interacts with CSN5 (PubMed:18755073).</text>
</comment>
<comment type="subcellular location">
    <subcellularLocation>
        <location evidence="7">Nucleus</location>
    </subcellularLocation>
</comment>
<comment type="tissue specificity">
    <text evidence="5">Widely expressed, with higher expression in developing tissues.</text>
</comment>
<comment type="similarity">
    <text evidence="7">Belongs to the MCM family.</text>
</comment>
<name>MCM2_ORYSJ</name>